<name>STHA_COLP3</name>
<dbReference type="EC" id="1.6.1.1" evidence="1"/>
<dbReference type="EMBL" id="CP000083">
    <property type="protein sequence ID" value="AAZ24633.1"/>
    <property type="molecule type" value="Genomic_DNA"/>
</dbReference>
<dbReference type="SMR" id="Q48A14"/>
<dbReference type="STRING" id="167879.CPS_0334"/>
<dbReference type="KEGG" id="cps:CPS_0334"/>
<dbReference type="eggNOG" id="COG1249">
    <property type="taxonomic scope" value="Bacteria"/>
</dbReference>
<dbReference type="HOGENOM" id="CLU_016755_0_0_6"/>
<dbReference type="Proteomes" id="UP000000547">
    <property type="component" value="Chromosome"/>
</dbReference>
<dbReference type="GO" id="GO:0005829">
    <property type="term" value="C:cytosol"/>
    <property type="evidence" value="ECO:0007669"/>
    <property type="project" value="TreeGrafter"/>
</dbReference>
<dbReference type="GO" id="GO:0004148">
    <property type="term" value="F:dihydrolipoyl dehydrogenase (NADH) activity"/>
    <property type="evidence" value="ECO:0007669"/>
    <property type="project" value="TreeGrafter"/>
</dbReference>
<dbReference type="GO" id="GO:0050660">
    <property type="term" value="F:flavin adenine dinucleotide binding"/>
    <property type="evidence" value="ECO:0007669"/>
    <property type="project" value="TreeGrafter"/>
</dbReference>
<dbReference type="GO" id="GO:0003957">
    <property type="term" value="F:NAD(P)+ transhydrogenase (Si-specific) activity"/>
    <property type="evidence" value="ECO:0007669"/>
    <property type="project" value="UniProtKB-UniRule"/>
</dbReference>
<dbReference type="GO" id="GO:0006103">
    <property type="term" value="P:2-oxoglutarate metabolic process"/>
    <property type="evidence" value="ECO:0007669"/>
    <property type="project" value="TreeGrafter"/>
</dbReference>
<dbReference type="GO" id="GO:0006739">
    <property type="term" value="P:NADP metabolic process"/>
    <property type="evidence" value="ECO:0007669"/>
    <property type="project" value="UniProtKB-UniRule"/>
</dbReference>
<dbReference type="FunFam" id="3.30.390.30:FF:000002">
    <property type="entry name" value="Soluble pyridine nucleotide transhydrogenase"/>
    <property type="match status" value="1"/>
</dbReference>
<dbReference type="FunFam" id="3.50.50.60:FF:000008">
    <property type="entry name" value="Soluble pyridine nucleotide transhydrogenase"/>
    <property type="match status" value="1"/>
</dbReference>
<dbReference type="Gene3D" id="3.30.390.30">
    <property type="match status" value="1"/>
</dbReference>
<dbReference type="Gene3D" id="3.50.50.60">
    <property type="entry name" value="FAD/NAD(P)-binding domain"/>
    <property type="match status" value="2"/>
</dbReference>
<dbReference type="HAMAP" id="MF_00247">
    <property type="entry name" value="SthA"/>
    <property type="match status" value="1"/>
</dbReference>
<dbReference type="InterPro" id="IPR050151">
    <property type="entry name" value="Class-I_Pyr_Nuc-Dis_Oxidored"/>
</dbReference>
<dbReference type="InterPro" id="IPR036188">
    <property type="entry name" value="FAD/NAD-bd_sf"/>
</dbReference>
<dbReference type="InterPro" id="IPR023753">
    <property type="entry name" value="FAD/NAD-binding_dom"/>
</dbReference>
<dbReference type="InterPro" id="IPR016156">
    <property type="entry name" value="FAD/NAD-linked_Rdtase_dimer_sf"/>
</dbReference>
<dbReference type="InterPro" id="IPR001100">
    <property type="entry name" value="Pyr_nuc-diS_OxRdtase"/>
</dbReference>
<dbReference type="InterPro" id="IPR004099">
    <property type="entry name" value="Pyr_nucl-diS_OxRdtase_dimer"/>
</dbReference>
<dbReference type="InterPro" id="IPR022962">
    <property type="entry name" value="STH_gammaproteobact"/>
</dbReference>
<dbReference type="NCBIfam" id="NF003585">
    <property type="entry name" value="PRK05249.1"/>
    <property type="match status" value="1"/>
</dbReference>
<dbReference type="PANTHER" id="PTHR22912">
    <property type="entry name" value="DISULFIDE OXIDOREDUCTASE"/>
    <property type="match status" value="1"/>
</dbReference>
<dbReference type="PANTHER" id="PTHR22912:SF93">
    <property type="entry name" value="SOLUBLE PYRIDINE NUCLEOTIDE TRANSHYDROGENASE"/>
    <property type="match status" value="1"/>
</dbReference>
<dbReference type="Pfam" id="PF07992">
    <property type="entry name" value="Pyr_redox_2"/>
    <property type="match status" value="1"/>
</dbReference>
<dbReference type="Pfam" id="PF02852">
    <property type="entry name" value="Pyr_redox_dim"/>
    <property type="match status" value="1"/>
</dbReference>
<dbReference type="PIRSF" id="PIRSF000350">
    <property type="entry name" value="Mercury_reductase_MerA"/>
    <property type="match status" value="1"/>
</dbReference>
<dbReference type="PRINTS" id="PR00368">
    <property type="entry name" value="FADPNR"/>
</dbReference>
<dbReference type="PRINTS" id="PR00411">
    <property type="entry name" value="PNDRDTASEI"/>
</dbReference>
<dbReference type="SUPFAM" id="SSF51905">
    <property type="entry name" value="FAD/NAD(P)-binding domain"/>
    <property type="match status" value="1"/>
</dbReference>
<dbReference type="SUPFAM" id="SSF55424">
    <property type="entry name" value="FAD/NAD-linked reductases, dimerisation (C-terminal) domain"/>
    <property type="match status" value="1"/>
</dbReference>
<feature type="chain" id="PRO_0000260232" description="Soluble pyridine nucleotide transhydrogenase">
    <location>
        <begin position="1"/>
        <end position="466"/>
    </location>
</feature>
<feature type="binding site" evidence="1">
    <location>
        <begin position="36"/>
        <end position="45"/>
    </location>
    <ligand>
        <name>FAD</name>
        <dbReference type="ChEBI" id="CHEBI:57692"/>
    </ligand>
</feature>
<proteinExistence type="inferred from homology"/>
<accession>Q48A14</accession>
<gene>
    <name evidence="1" type="primary">sthA</name>
    <name type="ordered locus">CPS_0334</name>
</gene>
<evidence type="ECO:0000255" key="1">
    <source>
        <dbReference type="HAMAP-Rule" id="MF_00247"/>
    </source>
</evidence>
<comment type="function">
    <text evidence="1">Conversion of NADPH, generated by peripheral catabolic pathways, to NADH, which can enter the respiratory chain for energy generation.</text>
</comment>
<comment type="catalytic activity">
    <reaction evidence="1">
        <text>NAD(+) + NADPH = NADH + NADP(+)</text>
        <dbReference type="Rhea" id="RHEA:11692"/>
        <dbReference type="ChEBI" id="CHEBI:57540"/>
        <dbReference type="ChEBI" id="CHEBI:57783"/>
        <dbReference type="ChEBI" id="CHEBI:57945"/>
        <dbReference type="ChEBI" id="CHEBI:58349"/>
        <dbReference type="EC" id="1.6.1.1"/>
    </reaction>
</comment>
<comment type="cofactor">
    <cofactor evidence="1">
        <name>FAD</name>
        <dbReference type="ChEBI" id="CHEBI:57692"/>
    </cofactor>
    <text evidence="1">Binds 1 FAD per subunit.</text>
</comment>
<comment type="subcellular location">
    <subcellularLocation>
        <location evidence="1">Cytoplasm</location>
    </subcellularLocation>
</comment>
<comment type="similarity">
    <text evidence="1">Belongs to the class-I pyridine nucleotide-disulfide oxidoreductase family.</text>
</comment>
<sequence>MEKSFDYDVIIIGTGPGGEGAAMNLAKRQKKVAIIERYHQVGGGCTHWGTIPSKALRQSVSRLIEYNSNPLFNQNEQVKQLTFQDILSHASAVIQKQVSLRSGFYNRNRVEHIQGQASFIDAHTISISHPDGSVEKISAKQIMIATGSRPYRPDDIDFDHPRVYDSDSILSLKHAPQHVIIYGAGVIGSEYASIFRGLGVKVDLINTRERLLSFLDTEMSDSLSYHLWNSGVVIRHGEEIERVESSEDAVIVHLKSGKKMRADCLLFANGRTGNTADLNLAAAGLKADGRGQLKVNDCYQTEVDNIFAVGDVIGYPSLASAAFDQGRIAASAMVDSSSKAKLIVDIPTGIYTIPEISSVGKTEQELTEAKIPYEVGRAQFKHLARAQISNNLVGSLKILFHRETKEILGIHCFGENAAEIIHIGQAIMQQTNGGNTIEYFVETTFNYPTMAEAFRVAALNGLNRLF</sequence>
<keyword id="KW-0963">Cytoplasm</keyword>
<keyword id="KW-0274">FAD</keyword>
<keyword id="KW-0285">Flavoprotein</keyword>
<keyword id="KW-0520">NAD</keyword>
<keyword id="KW-0521">NADP</keyword>
<keyword id="KW-0560">Oxidoreductase</keyword>
<reference key="1">
    <citation type="journal article" date="2005" name="Proc. Natl. Acad. Sci. U.S.A.">
        <title>The psychrophilic lifestyle as revealed by the genome sequence of Colwellia psychrerythraea 34H through genomic and proteomic analyses.</title>
        <authorList>
            <person name="Methe B.A."/>
            <person name="Nelson K.E."/>
            <person name="Deming J.W."/>
            <person name="Momen B."/>
            <person name="Melamud E."/>
            <person name="Zhang X."/>
            <person name="Moult J."/>
            <person name="Madupu R."/>
            <person name="Nelson W.C."/>
            <person name="Dodson R.J."/>
            <person name="Brinkac L.M."/>
            <person name="Daugherty S.C."/>
            <person name="Durkin A.S."/>
            <person name="DeBoy R.T."/>
            <person name="Kolonay J.F."/>
            <person name="Sullivan S.A."/>
            <person name="Zhou L."/>
            <person name="Davidsen T.M."/>
            <person name="Wu M."/>
            <person name="Huston A.L."/>
            <person name="Lewis M."/>
            <person name="Weaver B."/>
            <person name="Weidman J.F."/>
            <person name="Khouri H."/>
            <person name="Utterback T.R."/>
            <person name="Feldblyum T.V."/>
            <person name="Fraser C.M."/>
        </authorList>
    </citation>
    <scope>NUCLEOTIDE SEQUENCE [LARGE SCALE GENOMIC DNA]</scope>
    <source>
        <strain>34H / ATCC BAA-681</strain>
    </source>
</reference>
<protein>
    <recommendedName>
        <fullName evidence="1">Soluble pyridine nucleotide transhydrogenase</fullName>
        <shortName evidence="1">STH</shortName>
        <ecNumber evidence="1">1.6.1.1</ecNumber>
    </recommendedName>
    <alternativeName>
        <fullName evidence="1">NAD(P)(+) transhydrogenase [B-specific]</fullName>
    </alternativeName>
</protein>
<organism>
    <name type="scientific">Colwellia psychrerythraea (strain 34H / ATCC BAA-681)</name>
    <name type="common">Vibrio psychroerythus</name>
    <dbReference type="NCBI Taxonomy" id="167879"/>
    <lineage>
        <taxon>Bacteria</taxon>
        <taxon>Pseudomonadati</taxon>
        <taxon>Pseudomonadota</taxon>
        <taxon>Gammaproteobacteria</taxon>
        <taxon>Alteromonadales</taxon>
        <taxon>Colwelliaceae</taxon>
        <taxon>Colwellia</taxon>
    </lineage>
</organism>